<name>KHSE_BURA4</name>
<comment type="catalytic activity">
    <reaction evidence="1">
        <text>L-homoserine + ATP = O-phospho-L-homoserine + ADP + H(+)</text>
        <dbReference type="Rhea" id="RHEA:13985"/>
        <dbReference type="ChEBI" id="CHEBI:15378"/>
        <dbReference type="ChEBI" id="CHEBI:30616"/>
        <dbReference type="ChEBI" id="CHEBI:57476"/>
        <dbReference type="ChEBI" id="CHEBI:57590"/>
        <dbReference type="ChEBI" id="CHEBI:456216"/>
        <dbReference type="EC" id="2.7.1.39"/>
    </reaction>
</comment>
<comment type="pathway">
    <text evidence="1">Amino-acid biosynthesis; L-threonine biosynthesis; L-threonine from L-aspartate: step 4/5.</text>
</comment>
<comment type="similarity">
    <text evidence="1">Belongs to the pseudomonas-type ThrB family.</text>
</comment>
<feature type="chain" id="PRO_1000115425" description="Homoserine kinase">
    <location>
        <begin position="1"/>
        <end position="332"/>
    </location>
</feature>
<sequence length="332" mass="37165">MAVFTAVSDSDLAQWMRHYELGDVLAFRGIPSGIENSNFFLTTTRGEYVLTIFEKLTAEQLPFYLDLMRHLASHGVPVPDPIPRDDGALFGLLHGKPAAIVTKLDGAAELAPGIEHCIEVGQMLARLHLAGRDYARYQPNLRSLPWWQENVPAIVPFVSDAQRALLEGELAHQAAFFASDDYAALPSGPCHCDLFRDNVLFAHAAPGTGHDVRLGGFFDFYFAGCDKWLFDVAVTVNDWCVDLATGVLDVARADALLRAYQTVRPFTAAERRHWSDMLRAGAYRFWVSRLYDFYLPRAAEMLKPHDPGHFERILRERIAHTPALPETHTACN</sequence>
<reference key="1">
    <citation type="submission" date="2008-04" db="EMBL/GenBank/DDBJ databases">
        <title>Complete sequence of chromosome 2 of Burkholderia ambifaria MC40-6.</title>
        <authorList>
            <person name="Copeland A."/>
            <person name="Lucas S."/>
            <person name="Lapidus A."/>
            <person name="Glavina del Rio T."/>
            <person name="Dalin E."/>
            <person name="Tice H."/>
            <person name="Pitluck S."/>
            <person name="Chain P."/>
            <person name="Malfatti S."/>
            <person name="Shin M."/>
            <person name="Vergez L."/>
            <person name="Lang D."/>
            <person name="Schmutz J."/>
            <person name="Larimer F."/>
            <person name="Land M."/>
            <person name="Hauser L."/>
            <person name="Kyrpides N."/>
            <person name="Lykidis A."/>
            <person name="Ramette A."/>
            <person name="Konstantinidis K."/>
            <person name="Tiedje J."/>
            <person name="Richardson P."/>
        </authorList>
    </citation>
    <scope>NUCLEOTIDE SEQUENCE [LARGE SCALE GENOMIC DNA]</scope>
    <source>
        <strain>MC40-6</strain>
    </source>
</reference>
<accession>B1Z151</accession>
<evidence type="ECO:0000255" key="1">
    <source>
        <dbReference type="HAMAP-Rule" id="MF_00301"/>
    </source>
</evidence>
<organism>
    <name type="scientific">Burkholderia ambifaria (strain MC40-6)</name>
    <dbReference type="NCBI Taxonomy" id="398577"/>
    <lineage>
        <taxon>Bacteria</taxon>
        <taxon>Pseudomonadati</taxon>
        <taxon>Pseudomonadota</taxon>
        <taxon>Betaproteobacteria</taxon>
        <taxon>Burkholderiales</taxon>
        <taxon>Burkholderiaceae</taxon>
        <taxon>Burkholderia</taxon>
        <taxon>Burkholderia cepacia complex</taxon>
    </lineage>
</organism>
<keyword id="KW-0028">Amino-acid biosynthesis</keyword>
<keyword id="KW-0067">ATP-binding</keyword>
<keyword id="KW-0418">Kinase</keyword>
<keyword id="KW-0547">Nucleotide-binding</keyword>
<keyword id="KW-0791">Threonine biosynthesis</keyword>
<keyword id="KW-0808">Transferase</keyword>
<proteinExistence type="inferred from homology"/>
<dbReference type="EC" id="2.7.1.39" evidence="1"/>
<dbReference type="EMBL" id="CP001026">
    <property type="protein sequence ID" value="ACB66231.1"/>
    <property type="molecule type" value="Genomic_DNA"/>
</dbReference>
<dbReference type="RefSeq" id="WP_012365625.1">
    <property type="nucleotide sequence ID" value="NC_010552.1"/>
</dbReference>
<dbReference type="SMR" id="B1Z151"/>
<dbReference type="KEGG" id="bac:BamMC406_3764"/>
<dbReference type="HOGENOM" id="CLU_053300_0_0_4"/>
<dbReference type="OrthoDB" id="9777460at2"/>
<dbReference type="UniPathway" id="UPA00050">
    <property type="reaction ID" value="UER00064"/>
</dbReference>
<dbReference type="Proteomes" id="UP000001680">
    <property type="component" value="Chromosome 2"/>
</dbReference>
<dbReference type="GO" id="GO:0005524">
    <property type="term" value="F:ATP binding"/>
    <property type="evidence" value="ECO:0007669"/>
    <property type="project" value="UniProtKB-KW"/>
</dbReference>
<dbReference type="GO" id="GO:0004413">
    <property type="term" value="F:homoserine kinase activity"/>
    <property type="evidence" value="ECO:0007669"/>
    <property type="project" value="UniProtKB-UniRule"/>
</dbReference>
<dbReference type="GO" id="GO:0009088">
    <property type="term" value="P:threonine biosynthetic process"/>
    <property type="evidence" value="ECO:0007669"/>
    <property type="project" value="UniProtKB-UniRule"/>
</dbReference>
<dbReference type="CDD" id="cd05153">
    <property type="entry name" value="HomoserineK_II"/>
    <property type="match status" value="1"/>
</dbReference>
<dbReference type="Gene3D" id="3.90.1200.10">
    <property type="match status" value="1"/>
</dbReference>
<dbReference type="Gene3D" id="3.30.200.20">
    <property type="entry name" value="Phosphorylase Kinase, domain 1"/>
    <property type="match status" value="1"/>
</dbReference>
<dbReference type="HAMAP" id="MF_00301">
    <property type="entry name" value="Homoser_kinase_2"/>
    <property type="match status" value="1"/>
</dbReference>
<dbReference type="InterPro" id="IPR002575">
    <property type="entry name" value="Aminoglycoside_PTrfase"/>
</dbReference>
<dbReference type="InterPro" id="IPR005280">
    <property type="entry name" value="Homoserine_kinase_II"/>
</dbReference>
<dbReference type="InterPro" id="IPR011009">
    <property type="entry name" value="Kinase-like_dom_sf"/>
</dbReference>
<dbReference type="InterPro" id="IPR050249">
    <property type="entry name" value="Pseudomonas-type_ThrB"/>
</dbReference>
<dbReference type="NCBIfam" id="NF003558">
    <property type="entry name" value="PRK05231.1"/>
    <property type="match status" value="1"/>
</dbReference>
<dbReference type="NCBIfam" id="TIGR00938">
    <property type="entry name" value="thrB_alt"/>
    <property type="match status" value="1"/>
</dbReference>
<dbReference type="PANTHER" id="PTHR21064:SF6">
    <property type="entry name" value="AMINOGLYCOSIDE PHOSPHOTRANSFERASE DOMAIN-CONTAINING PROTEIN"/>
    <property type="match status" value="1"/>
</dbReference>
<dbReference type="PANTHER" id="PTHR21064">
    <property type="entry name" value="AMINOGLYCOSIDE PHOSPHOTRANSFERASE DOMAIN-CONTAINING PROTEIN-RELATED"/>
    <property type="match status" value="1"/>
</dbReference>
<dbReference type="Pfam" id="PF01636">
    <property type="entry name" value="APH"/>
    <property type="match status" value="1"/>
</dbReference>
<dbReference type="SUPFAM" id="SSF56112">
    <property type="entry name" value="Protein kinase-like (PK-like)"/>
    <property type="match status" value="1"/>
</dbReference>
<protein>
    <recommendedName>
        <fullName evidence="1">Homoserine kinase</fullName>
        <shortName evidence="1">HK</shortName>
        <shortName evidence="1">HSK</shortName>
        <ecNumber evidence="1">2.7.1.39</ecNumber>
    </recommendedName>
</protein>
<gene>
    <name evidence="1" type="primary">thrB</name>
    <name type="ordered locus">BamMC406_3764</name>
</gene>